<accession>A1VMG1</accession>
<evidence type="ECO:0000255" key="1">
    <source>
        <dbReference type="HAMAP-Rule" id="MF_01152"/>
    </source>
</evidence>
<evidence type="ECO:0000256" key="2">
    <source>
        <dbReference type="SAM" id="MobiDB-lite"/>
    </source>
</evidence>
<name>DNAJ_POLNA</name>
<keyword id="KW-0143">Chaperone</keyword>
<keyword id="KW-0963">Cytoplasm</keyword>
<keyword id="KW-0235">DNA replication</keyword>
<keyword id="KW-0479">Metal-binding</keyword>
<keyword id="KW-1185">Reference proteome</keyword>
<keyword id="KW-0677">Repeat</keyword>
<keyword id="KW-0346">Stress response</keyword>
<keyword id="KW-0862">Zinc</keyword>
<keyword id="KW-0863">Zinc-finger</keyword>
<comment type="function">
    <text evidence="1">Participates actively in the response to hyperosmotic and heat shock by preventing the aggregation of stress-denatured proteins and by disaggregating proteins, also in an autonomous, DnaK-independent fashion. Unfolded proteins bind initially to DnaJ; upon interaction with the DnaJ-bound protein, DnaK hydrolyzes its bound ATP, resulting in the formation of a stable complex. GrpE releases ADP from DnaK; ATP binding to DnaK triggers the release of the substrate protein, thus completing the reaction cycle. Several rounds of ATP-dependent interactions between DnaJ, DnaK and GrpE are required for fully efficient folding. Also involved, together with DnaK and GrpE, in the DNA replication of plasmids through activation of initiation proteins.</text>
</comment>
<comment type="cofactor">
    <cofactor evidence="1">
        <name>Zn(2+)</name>
        <dbReference type="ChEBI" id="CHEBI:29105"/>
    </cofactor>
    <text evidence="1">Binds 2 Zn(2+) ions per monomer.</text>
</comment>
<comment type="subunit">
    <text evidence="1">Homodimer.</text>
</comment>
<comment type="subcellular location">
    <subcellularLocation>
        <location evidence="1">Cytoplasm</location>
    </subcellularLocation>
</comment>
<comment type="domain">
    <text evidence="1">The J domain is necessary and sufficient to stimulate DnaK ATPase activity. Zinc center 1 plays an important role in the autonomous, DnaK-independent chaperone activity of DnaJ. Zinc center 2 is essential for interaction with DnaK and for DnaJ activity.</text>
</comment>
<comment type="similarity">
    <text evidence="1">Belongs to the DnaJ family.</text>
</comment>
<feature type="chain" id="PRO_1000085244" description="Chaperone protein DnaJ">
    <location>
        <begin position="1"/>
        <end position="380"/>
    </location>
</feature>
<feature type="domain" description="J" evidence="1">
    <location>
        <begin position="5"/>
        <end position="72"/>
    </location>
</feature>
<feature type="repeat" description="CXXCXGXG motif">
    <location>
        <begin position="152"/>
        <end position="159"/>
    </location>
</feature>
<feature type="repeat" description="CXXCXGXG motif">
    <location>
        <begin position="169"/>
        <end position="176"/>
    </location>
</feature>
<feature type="repeat" description="CXXCXGXG motif">
    <location>
        <begin position="191"/>
        <end position="198"/>
    </location>
</feature>
<feature type="repeat" description="CXXCXGXG motif">
    <location>
        <begin position="205"/>
        <end position="212"/>
    </location>
</feature>
<feature type="zinc finger region" description="CR-type" evidence="1">
    <location>
        <begin position="139"/>
        <end position="217"/>
    </location>
</feature>
<feature type="region of interest" description="Disordered" evidence="2">
    <location>
        <begin position="21"/>
        <end position="47"/>
    </location>
</feature>
<feature type="compositionally biased region" description="Basic residues" evidence="2">
    <location>
        <begin position="24"/>
        <end position="34"/>
    </location>
</feature>
<feature type="compositionally biased region" description="Basic and acidic residues" evidence="2">
    <location>
        <begin position="35"/>
        <end position="47"/>
    </location>
</feature>
<feature type="binding site" evidence="1">
    <location>
        <position position="152"/>
    </location>
    <ligand>
        <name>Zn(2+)</name>
        <dbReference type="ChEBI" id="CHEBI:29105"/>
        <label>1</label>
    </ligand>
</feature>
<feature type="binding site" evidence="1">
    <location>
        <position position="155"/>
    </location>
    <ligand>
        <name>Zn(2+)</name>
        <dbReference type="ChEBI" id="CHEBI:29105"/>
        <label>1</label>
    </ligand>
</feature>
<feature type="binding site" evidence="1">
    <location>
        <position position="169"/>
    </location>
    <ligand>
        <name>Zn(2+)</name>
        <dbReference type="ChEBI" id="CHEBI:29105"/>
        <label>2</label>
    </ligand>
</feature>
<feature type="binding site" evidence="1">
    <location>
        <position position="172"/>
    </location>
    <ligand>
        <name>Zn(2+)</name>
        <dbReference type="ChEBI" id="CHEBI:29105"/>
        <label>2</label>
    </ligand>
</feature>
<feature type="binding site" evidence="1">
    <location>
        <position position="191"/>
    </location>
    <ligand>
        <name>Zn(2+)</name>
        <dbReference type="ChEBI" id="CHEBI:29105"/>
        <label>2</label>
    </ligand>
</feature>
<feature type="binding site" evidence="1">
    <location>
        <position position="194"/>
    </location>
    <ligand>
        <name>Zn(2+)</name>
        <dbReference type="ChEBI" id="CHEBI:29105"/>
        <label>2</label>
    </ligand>
</feature>
<feature type="binding site" evidence="1">
    <location>
        <position position="205"/>
    </location>
    <ligand>
        <name>Zn(2+)</name>
        <dbReference type="ChEBI" id="CHEBI:29105"/>
        <label>1</label>
    </ligand>
</feature>
<feature type="binding site" evidence="1">
    <location>
        <position position="208"/>
    </location>
    <ligand>
        <name>Zn(2+)</name>
        <dbReference type="ChEBI" id="CHEBI:29105"/>
        <label>1</label>
    </ligand>
</feature>
<organism>
    <name type="scientific">Polaromonas naphthalenivorans (strain CJ2)</name>
    <dbReference type="NCBI Taxonomy" id="365044"/>
    <lineage>
        <taxon>Bacteria</taxon>
        <taxon>Pseudomonadati</taxon>
        <taxon>Pseudomonadota</taxon>
        <taxon>Betaproteobacteria</taxon>
        <taxon>Burkholderiales</taxon>
        <taxon>Comamonadaceae</taxon>
        <taxon>Polaromonas</taxon>
    </lineage>
</organism>
<gene>
    <name evidence="1" type="primary">dnaJ</name>
    <name type="ordered locus">Pnap_1525</name>
</gene>
<dbReference type="EMBL" id="CP000529">
    <property type="protein sequence ID" value="ABM36839.1"/>
    <property type="molecule type" value="Genomic_DNA"/>
</dbReference>
<dbReference type="RefSeq" id="WP_011800926.1">
    <property type="nucleotide sequence ID" value="NC_008781.1"/>
</dbReference>
<dbReference type="SMR" id="A1VMG1"/>
<dbReference type="STRING" id="365044.Pnap_1525"/>
<dbReference type="KEGG" id="pna:Pnap_1525"/>
<dbReference type="eggNOG" id="COG0484">
    <property type="taxonomic scope" value="Bacteria"/>
</dbReference>
<dbReference type="HOGENOM" id="CLU_017633_0_7_4"/>
<dbReference type="OrthoDB" id="9779889at2"/>
<dbReference type="Proteomes" id="UP000000644">
    <property type="component" value="Chromosome"/>
</dbReference>
<dbReference type="GO" id="GO:0005737">
    <property type="term" value="C:cytoplasm"/>
    <property type="evidence" value="ECO:0007669"/>
    <property type="project" value="UniProtKB-SubCell"/>
</dbReference>
<dbReference type="GO" id="GO:0005524">
    <property type="term" value="F:ATP binding"/>
    <property type="evidence" value="ECO:0007669"/>
    <property type="project" value="InterPro"/>
</dbReference>
<dbReference type="GO" id="GO:0031072">
    <property type="term" value="F:heat shock protein binding"/>
    <property type="evidence" value="ECO:0007669"/>
    <property type="project" value="InterPro"/>
</dbReference>
<dbReference type="GO" id="GO:0051082">
    <property type="term" value="F:unfolded protein binding"/>
    <property type="evidence" value="ECO:0007669"/>
    <property type="project" value="UniProtKB-UniRule"/>
</dbReference>
<dbReference type="GO" id="GO:0008270">
    <property type="term" value="F:zinc ion binding"/>
    <property type="evidence" value="ECO:0007669"/>
    <property type="project" value="UniProtKB-UniRule"/>
</dbReference>
<dbReference type="GO" id="GO:0051085">
    <property type="term" value="P:chaperone cofactor-dependent protein refolding"/>
    <property type="evidence" value="ECO:0007669"/>
    <property type="project" value="TreeGrafter"/>
</dbReference>
<dbReference type="GO" id="GO:0006260">
    <property type="term" value="P:DNA replication"/>
    <property type="evidence" value="ECO:0007669"/>
    <property type="project" value="UniProtKB-KW"/>
</dbReference>
<dbReference type="GO" id="GO:0042026">
    <property type="term" value="P:protein refolding"/>
    <property type="evidence" value="ECO:0007669"/>
    <property type="project" value="TreeGrafter"/>
</dbReference>
<dbReference type="GO" id="GO:0009408">
    <property type="term" value="P:response to heat"/>
    <property type="evidence" value="ECO:0007669"/>
    <property type="project" value="InterPro"/>
</dbReference>
<dbReference type="CDD" id="cd06257">
    <property type="entry name" value="DnaJ"/>
    <property type="match status" value="1"/>
</dbReference>
<dbReference type="CDD" id="cd10747">
    <property type="entry name" value="DnaJ_C"/>
    <property type="match status" value="1"/>
</dbReference>
<dbReference type="CDD" id="cd10719">
    <property type="entry name" value="DnaJ_zf"/>
    <property type="match status" value="1"/>
</dbReference>
<dbReference type="FunFam" id="1.10.287.110:FF:000034">
    <property type="entry name" value="Chaperone protein DnaJ"/>
    <property type="match status" value="1"/>
</dbReference>
<dbReference type="FunFam" id="2.10.230.10:FF:000002">
    <property type="entry name" value="Molecular chaperone DnaJ"/>
    <property type="match status" value="1"/>
</dbReference>
<dbReference type="FunFam" id="2.60.260.20:FF:000004">
    <property type="entry name" value="Molecular chaperone DnaJ"/>
    <property type="match status" value="1"/>
</dbReference>
<dbReference type="Gene3D" id="1.10.287.110">
    <property type="entry name" value="DnaJ domain"/>
    <property type="match status" value="1"/>
</dbReference>
<dbReference type="Gene3D" id="2.10.230.10">
    <property type="entry name" value="Heat shock protein DnaJ, cysteine-rich domain"/>
    <property type="match status" value="1"/>
</dbReference>
<dbReference type="Gene3D" id="2.60.260.20">
    <property type="entry name" value="Urease metallochaperone UreE, N-terminal domain"/>
    <property type="match status" value="2"/>
</dbReference>
<dbReference type="HAMAP" id="MF_01152">
    <property type="entry name" value="DnaJ"/>
    <property type="match status" value="1"/>
</dbReference>
<dbReference type="InterPro" id="IPR012724">
    <property type="entry name" value="DnaJ"/>
</dbReference>
<dbReference type="InterPro" id="IPR002939">
    <property type="entry name" value="DnaJ_C"/>
</dbReference>
<dbReference type="InterPro" id="IPR001623">
    <property type="entry name" value="DnaJ_domain"/>
</dbReference>
<dbReference type="InterPro" id="IPR018253">
    <property type="entry name" value="DnaJ_domain_CS"/>
</dbReference>
<dbReference type="InterPro" id="IPR008971">
    <property type="entry name" value="HSP40/DnaJ_pept-bd"/>
</dbReference>
<dbReference type="InterPro" id="IPR001305">
    <property type="entry name" value="HSP_DnaJ_Cys-rich_dom"/>
</dbReference>
<dbReference type="InterPro" id="IPR036410">
    <property type="entry name" value="HSP_DnaJ_Cys-rich_dom_sf"/>
</dbReference>
<dbReference type="InterPro" id="IPR036869">
    <property type="entry name" value="J_dom_sf"/>
</dbReference>
<dbReference type="NCBIfam" id="TIGR02349">
    <property type="entry name" value="DnaJ_bact"/>
    <property type="match status" value="1"/>
</dbReference>
<dbReference type="NCBIfam" id="NF008035">
    <property type="entry name" value="PRK10767.1"/>
    <property type="match status" value="1"/>
</dbReference>
<dbReference type="PANTHER" id="PTHR43096:SF48">
    <property type="entry name" value="CHAPERONE PROTEIN DNAJ"/>
    <property type="match status" value="1"/>
</dbReference>
<dbReference type="PANTHER" id="PTHR43096">
    <property type="entry name" value="DNAJ HOMOLOG 1, MITOCHONDRIAL-RELATED"/>
    <property type="match status" value="1"/>
</dbReference>
<dbReference type="Pfam" id="PF00226">
    <property type="entry name" value="DnaJ"/>
    <property type="match status" value="1"/>
</dbReference>
<dbReference type="Pfam" id="PF01556">
    <property type="entry name" value="DnaJ_C"/>
    <property type="match status" value="1"/>
</dbReference>
<dbReference type="Pfam" id="PF00684">
    <property type="entry name" value="DnaJ_CXXCXGXG"/>
    <property type="match status" value="1"/>
</dbReference>
<dbReference type="PRINTS" id="PR00625">
    <property type="entry name" value="JDOMAIN"/>
</dbReference>
<dbReference type="SMART" id="SM00271">
    <property type="entry name" value="DnaJ"/>
    <property type="match status" value="1"/>
</dbReference>
<dbReference type="SUPFAM" id="SSF46565">
    <property type="entry name" value="Chaperone J-domain"/>
    <property type="match status" value="1"/>
</dbReference>
<dbReference type="SUPFAM" id="SSF57938">
    <property type="entry name" value="DnaJ/Hsp40 cysteine-rich domain"/>
    <property type="match status" value="1"/>
</dbReference>
<dbReference type="SUPFAM" id="SSF49493">
    <property type="entry name" value="HSP40/DnaJ peptide-binding domain"/>
    <property type="match status" value="2"/>
</dbReference>
<dbReference type="PROSITE" id="PS00636">
    <property type="entry name" value="DNAJ_1"/>
    <property type="match status" value="1"/>
</dbReference>
<dbReference type="PROSITE" id="PS50076">
    <property type="entry name" value="DNAJ_2"/>
    <property type="match status" value="1"/>
</dbReference>
<dbReference type="PROSITE" id="PS51188">
    <property type="entry name" value="ZF_CR"/>
    <property type="match status" value="1"/>
</dbReference>
<proteinExistence type="inferred from homology"/>
<reference key="1">
    <citation type="journal article" date="2009" name="Environ. Microbiol.">
        <title>The genome of Polaromonas naphthalenivorans strain CJ2, isolated from coal tar-contaminated sediment, reveals physiological and metabolic versatility and evolution through extensive horizontal gene transfer.</title>
        <authorList>
            <person name="Yagi J.M."/>
            <person name="Sims D."/>
            <person name="Brettin T."/>
            <person name="Bruce D."/>
            <person name="Madsen E.L."/>
        </authorList>
    </citation>
    <scope>NUCLEOTIDE SEQUENCE [LARGE SCALE GENOMIC DNA]</scope>
    <source>
        <strain>CJ2</strain>
    </source>
</reference>
<protein>
    <recommendedName>
        <fullName evidence="1">Chaperone protein DnaJ</fullName>
    </recommendedName>
</protein>
<sequence>MAKKDYYDTLGVPKNASDEDIKKAYRKLAMKHHPDRNQGDTSKVSEDKFKEAKEAYEMLSDAQKRAAYDQYGHAGVDPNRGGGPGAEGFGGFAEAFGDIFGDVFGGQRGGAQGGGGRQVYRGGDLSYAMEVTLEEAAAGKEAQIRIPSWDDCGICHGTGAKPGTKVATCTTCHGHGVVQMRQGFFSVQQTCPQCKGSGKLIPSPCVACHGVGKTKNNKTLEVKIPAGIDDGMRIRSTGNGEPGTNGGPPGDLYIEIRLKKHDIFERDGDDLHCSMPISFMTAALGGEIEVPTLAGKAAIDIPEGTQAGKQFRLRGKGIKGVRSSYPGDLYCHITVETPVKLTEHQRKLLKELDESIKKGGAKHSPSEEGWTDKLKNFFGA</sequence>